<protein>
    <recommendedName>
        <fullName evidence="1">Protein RnfH</fullName>
    </recommendedName>
</protein>
<accession>B7N6K3</accession>
<gene>
    <name evidence="1" type="primary">rnfH</name>
    <name type="ordered locus">ECUMN_2942</name>
</gene>
<name>RNFH_ECOLU</name>
<evidence type="ECO:0000255" key="1">
    <source>
        <dbReference type="HAMAP-Rule" id="MF_00460"/>
    </source>
</evidence>
<reference key="1">
    <citation type="journal article" date="2009" name="PLoS Genet.">
        <title>Organised genome dynamics in the Escherichia coli species results in highly diverse adaptive paths.</title>
        <authorList>
            <person name="Touchon M."/>
            <person name="Hoede C."/>
            <person name="Tenaillon O."/>
            <person name="Barbe V."/>
            <person name="Baeriswyl S."/>
            <person name="Bidet P."/>
            <person name="Bingen E."/>
            <person name="Bonacorsi S."/>
            <person name="Bouchier C."/>
            <person name="Bouvet O."/>
            <person name="Calteau A."/>
            <person name="Chiapello H."/>
            <person name="Clermont O."/>
            <person name="Cruveiller S."/>
            <person name="Danchin A."/>
            <person name="Diard M."/>
            <person name="Dossat C."/>
            <person name="Karoui M.E."/>
            <person name="Frapy E."/>
            <person name="Garry L."/>
            <person name="Ghigo J.M."/>
            <person name="Gilles A.M."/>
            <person name="Johnson J."/>
            <person name="Le Bouguenec C."/>
            <person name="Lescat M."/>
            <person name="Mangenot S."/>
            <person name="Martinez-Jehanne V."/>
            <person name="Matic I."/>
            <person name="Nassif X."/>
            <person name="Oztas S."/>
            <person name="Petit M.A."/>
            <person name="Pichon C."/>
            <person name="Rouy Z."/>
            <person name="Ruf C.S."/>
            <person name="Schneider D."/>
            <person name="Tourret J."/>
            <person name="Vacherie B."/>
            <person name="Vallenet D."/>
            <person name="Medigue C."/>
            <person name="Rocha E.P.C."/>
            <person name="Denamur E."/>
        </authorList>
    </citation>
    <scope>NUCLEOTIDE SEQUENCE [LARGE SCALE GENOMIC DNA]</scope>
    <source>
        <strain>UMN026 / ExPEC</strain>
    </source>
</reference>
<proteinExistence type="inferred from homology"/>
<sequence>MPGKIAVEVAYALPEKQYLQRVTLQEGATVEEAIRASGLLELRTDIDLTKNKVGIYSRPAKLSDTVHDGDRVEIYRPLIADPKELRRQRAEKSANK</sequence>
<organism>
    <name type="scientific">Escherichia coli O17:K52:H18 (strain UMN026 / ExPEC)</name>
    <dbReference type="NCBI Taxonomy" id="585056"/>
    <lineage>
        <taxon>Bacteria</taxon>
        <taxon>Pseudomonadati</taxon>
        <taxon>Pseudomonadota</taxon>
        <taxon>Gammaproteobacteria</taxon>
        <taxon>Enterobacterales</taxon>
        <taxon>Enterobacteriaceae</taxon>
        <taxon>Escherichia</taxon>
    </lineage>
</organism>
<comment type="similarity">
    <text evidence="1">Belongs to the UPF0125 (RnfH) family.</text>
</comment>
<feature type="chain" id="PRO_1000200179" description="Protein RnfH">
    <location>
        <begin position="1"/>
        <end position="96"/>
    </location>
</feature>
<dbReference type="EMBL" id="CU928163">
    <property type="protein sequence ID" value="CAR14113.1"/>
    <property type="molecule type" value="Genomic_DNA"/>
</dbReference>
<dbReference type="RefSeq" id="WP_001117840.1">
    <property type="nucleotide sequence ID" value="NC_011751.1"/>
</dbReference>
<dbReference type="RefSeq" id="YP_002413637.1">
    <property type="nucleotide sequence ID" value="NC_011751.1"/>
</dbReference>
<dbReference type="SMR" id="B7N6K3"/>
<dbReference type="STRING" id="585056.ECUMN_2942"/>
<dbReference type="KEGG" id="eum:ECUMN_2942"/>
<dbReference type="PATRIC" id="fig|585056.7.peg.3124"/>
<dbReference type="HOGENOM" id="CLU_150721_1_0_6"/>
<dbReference type="Proteomes" id="UP000007097">
    <property type="component" value="Chromosome"/>
</dbReference>
<dbReference type="Gene3D" id="3.10.20.280">
    <property type="entry name" value="RnfH-like"/>
    <property type="match status" value="1"/>
</dbReference>
<dbReference type="HAMAP" id="MF_00460">
    <property type="entry name" value="UPF0125_RnfH"/>
    <property type="match status" value="1"/>
</dbReference>
<dbReference type="InterPro" id="IPR016155">
    <property type="entry name" value="Mopterin_synth/thiamin_S_b"/>
</dbReference>
<dbReference type="InterPro" id="IPR005346">
    <property type="entry name" value="RnfH"/>
</dbReference>
<dbReference type="InterPro" id="IPR037021">
    <property type="entry name" value="RnfH_sf"/>
</dbReference>
<dbReference type="NCBIfam" id="NF002490">
    <property type="entry name" value="PRK01777.1"/>
    <property type="match status" value="1"/>
</dbReference>
<dbReference type="PANTHER" id="PTHR37483">
    <property type="entry name" value="UPF0125 PROTEIN RATB"/>
    <property type="match status" value="1"/>
</dbReference>
<dbReference type="PANTHER" id="PTHR37483:SF1">
    <property type="entry name" value="UPF0125 PROTEIN RATB"/>
    <property type="match status" value="1"/>
</dbReference>
<dbReference type="Pfam" id="PF03658">
    <property type="entry name" value="Ub-RnfH"/>
    <property type="match status" value="1"/>
</dbReference>
<dbReference type="SUPFAM" id="SSF54285">
    <property type="entry name" value="MoaD/ThiS"/>
    <property type="match status" value="1"/>
</dbReference>